<gene>
    <name type="primary">ygcE</name>
    <name type="ordered locus">b2776</name>
    <name type="ordered locus">JW5444</name>
</gene>
<evidence type="ECO:0000305" key="1"/>
<reference key="1">
    <citation type="journal article" date="1997" name="Science">
        <title>The complete genome sequence of Escherichia coli K-12.</title>
        <authorList>
            <person name="Blattner F.R."/>
            <person name="Plunkett G. III"/>
            <person name="Bloch C.A."/>
            <person name="Perna N.T."/>
            <person name="Burland V."/>
            <person name="Riley M."/>
            <person name="Collado-Vides J."/>
            <person name="Glasner J.D."/>
            <person name="Rode C.K."/>
            <person name="Mayhew G.F."/>
            <person name="Gregor J."/>
            <person name="Davis N.W."/>
            <person name="Kirkpatrick H.A."/>
            <person name="Goeden M.A."/>
            <person name="Rose D.J."/>
            <person name="Mau B."/>
            <person name="Shao Y."/>
        </authorList>
    </citation>
    <scope>NUCLEOTIDE SEQUENCE [LARGE SCALE GENOMIC DNA]</scope>
    <source>
        <strain>K12 / MG1655 / ATCC 47076</strain>
    </source>
</reference>
<reference key="2">
    <citation type="journal article" date="2006" name="Mol. Syst. Biol.">
        <title>Highly accurate genome sequences of Escherichia coli K-12 strains MG1655 and W3110.</title>
        <authorList>
            <person name="Hayashi K."/>
            <person name="Morooka N."/>
            <person name="Yamamoto Y."/>
            <person name="Fujita K."/>
            <person name="Isono K."/>
            <person name="Choi S."/>
            <person name="Ohtsubo E."/>
            <person name="Baba T."/>
            <person name="Wanner B.L."/>
            <person name="Mori H."/>
            <person name="Horiuchi T."/>
        </authorList>
    </citation>
    <scope>NUCLEOTIDE SEQUENCE [LARGE SCALE GENOMIC DNA]</scope>
    <source>
        <strain>K12 / W3110 / ATCC 27325 / DSM 5911</strain>
    </source>
</reference>
<keyword id="KW-0418">Kinase</keyword>
<keyword id="KW-1185">Reference proteome</keyword>
<keyword id="KW-0808">Transferase</keyword>
<sequence length="492" mass="54177">MSKKYIIGIDGGSQSTKVVMYDLEGNVVCEGKGLLQPMHTPDADTAEHPDDDLWASLCFAGHDLMSQFAGNKEDIVGIGLGSIRCCRALLKADGTPAAPLISWQDARVTRPYEHTNPDVAYVTSFSGYLTHRLTGEFKDNIANYFGQWPVDYKSWAWSEDAAVMDKFNIPRHMLFDVQMPGTVLGHITPQAALATHFPAGLPVVCTTSDKPVEALGAGLLDDETAVISLGTYIALMMNGKALPKDPVAYWPIMSSIPQTLLYEGYGIRKGMWTVSWLRDMLGESLIQDARAQDLSPEDLLNKKASCVPPGCNGLMTVLDWLTNPWEPYKRGIMIGFDSSMDYAWIYRSILESVALTLKNNYDNMCNEMNHFAKHVIITGGGSNSDLFMQIFADVFNLPARRNAINGCASLGAAINTAVGLGLYPDYATAVDNMVRVKDIFIPIESNAKRYDAMNKGIFKDLTKHTDVILKKSYEVMHGELGNVDSIQSWSNA</sequence>
<dbReference type="EC" id="2.7.1.-"/>
<dbReference type="EMBL" id="U29580">
    <property type="protein sequence ID" value="AAA69286.1"/>
    <property type="status" value="ALT_INIT"/>
    <property type="molecule type" value="Genomic_DNA"/>
</dbReference>
<dbReference type="EMBL" id="U00096">
    <property type="protein sequence ID" value="AAC75818.1"/>
    <property type="molecule type" value="Genomic_DNA"/>
</dbReference>
<dbReference type="EMBL" id="AP009048">
    <property type="protein sequence ID" value="BAE76850.1"/>
    <property type="molecule type" value="Genomic_DNA"/>
</dbReference>
<dbReference type="PIR" id="D65059">
    <property type="entry name" value="D65059"/>
</dbReference>
<dbReference type="RefSeq" id="NP_417256.1">
    <property type="nucleotide sequence ID" value="NC_000913.3"/>
</dbReference>
<dbReference type="RefSeq" id="WP_000039688.1">
    <property type="nucleotide sequence ID" value="NZ_LN832404.1"/>
</dbReference>
<dbReference type="SMR" id="P55138"/>
<dbReference type="BioGRID" id="4262294">
    <property type="interactions" value="15"/>
</dbReference>
<dbReference type="FunCoup" id="P55138">
    <property type="interactions" value="196"/>
</dbReference>
<dbReference type="STRING" id="511145.b2776"/>
<dbReference type="PaxDb" id="511145-b2776"/>
<dbReference type="EnsemblBacteria" id="AAC75818">
    <property type="protein sequence ID" value="AAC75818"/>
    <property type="gene ID" value="b2776"/>
</dbReference>
<dbReference type="GeneID" id="946193"/>
<dbReference type="KEGG" id="ecj:JW5444"/>
<dbReference type="KEGG" id="eco:b2776"/>
<dbReference type="KEGG" id="ecoc:C3026_15245"/>
<dbReference type="PATRIC" id="fig|1411691.4.peg.3962"/>
<dbReference type="EchoBASE" id="EB2848"/>
<dbReference type="eggNOG" id="COG1070">
    <property type="taxonomic scope" value="Bacteria"/>
</dbReference>
<dbReference type="HOGENOM" id="CLU_009281_3_4_6"/>
<dbReference type="InParanoid" id="P55138"/>
<dbReference type="OMA" id="YISWRHA"/>
<dbReference type="OrthoDB" id="9805576at2"/>
<dbReference type="PhylomeDB" id="P55138"/>
<dbReference type="BioCyc" id="EcoCyc:G7442-MONOMER"/>
<dbReference type="PRO" id="PR:P55138"/>
<dbReference type="Proteomes" id="UP000000625">
    <property type="component" value="Chromosome"/>
</dbReference>
<dbReference type="GO" id="GO:0016301">
    <property type="term" value="F:kinase activity"/>
    <property type="evidence" value="ECO:0007669"/>
    <property type="project" value="UniProtKB-KW"/>
</dbReference>
<dbReference type="GO" id="GO:0005975">
    <property type="term" value="P:carbohydrate metabolic process"/>
    <property type="evidence" value="ECO:0007669"/>
    <property type="project" value="InterPro"/>
</dbReference>
<dbReference type="CDD" id="cd07779">
    <property type="entry name" value="ASKHA_NBD_FGGY_YgcE-like"/>
    <property type="match status" value="1"/>
</dbReference>
<dbReference type="Gene3D" id="3.30.420.40">
    <property type="match status" value="3"/>
</dbReference>
<dbReference type="InterPro" id="IPR043129">
    <property type="entry name" value="ATPase_NBD"/>
</dbReference>
<dbReference type="InterPro" id="IPR000577">
    <property type="entry name" value="Carb_kinase_FGGY"/>
</dbReference>
<dbReference type="InterPro" id="IPR018485">
    <property type="entry name" value="FGGY_C"/>
</dbReference>
<dbReference type="InterPro" id="IPR050406">
    <property type="entry name" value="FGGY_Carb_Kinase"/>
</dbReference>
<dbReference type="InterPro" id="IPR018484">
    <property type="entry name" value="FGGY_N"/>
</dbReference>
<dbReference type="PANTHER" id="PTHR43095">
    <property type="entry name" value="SUGAR KINASE"/>
    <property type="match status" value="1"/>
</dbReference>
<dbReference type="PANTHER" id="PTHR43095:SF5">
    <property type="entry name" value="XYLULOSE KINASE"/>
    <property type="match status" value="1"/>
</dbReference>
<dbReference type="Pfam" id="PF02782">
    <property type="entry name" value="FGGY_C"/>
    <property type="match status" value="1"/>
</dbReference>
<dbReference type="Pfam" id="PF00370">
    <property type="entry name" value="FGGY_N"/>
    <property type="match status" value="1"/>
</dbReference>
<dbReference type="PIRSF" id="PIRSF000538">
    <property type="entry name" value="GlpK"/>
    <property type="match status" value="1"/>
</dbReference>
<dbReference type="SUPFAM" id="SSF53067">
    <property type="entry name" value="Actin-like ATPase domain"/>
    <property type="match status" value="2"/>
</dbReference>
<comment type="similarity">
    <text evidence="1">Belongs to the FGGY kinase family.</text>
</comment>
<comment type="sequence caution" evidence="1">
    <conflict type="erroneous initiation">
        <sequence resource="EMBL-CDS" id="AAA69286"/>
    </conflict>
</comment>
<feature type="chain" id="PRO_0000059567" description="Uncharacterized sugar kinase YgcE">
    <location>
        <begin position="1"/>
        <end position="492"/>
    </location>
</feature>
<protein>
    <recommendedName>
        <fullName>Uncharacterized sugar kinase YgcE</fullName>
        <ecNumber>2.7.1.-</ecNumber>
    </recommendedName>
</protein>
<name>YGCE_ECOLI</name>
<organism>
    <name type="scientific">Escherichia coli (strain K12)</name>
    <dbReference type="NCBI Taxonomy" id="83333"/>
    <lineage>
        <taxon>Bacteria</taxon>
        <taxon>Pseudomonadati</taxon>
        <taxon>Pseudomonadota</taxon>
        <taxon>Gammaproteobacteria</taxon>
        <taxon>Enterobacterales</taxon>
        <taxon>Enterobacteriaceae</taxon>
        <taxon>Escherichia</taxon>
    </lineage>
</organism>
<accession>P55138</accession>
<accession>P76636</accession>
<accession>Q2MA56</accession>
<proteinExistence type="inferred from homology"/>